<evidence type="ECO:0000255" key="1">
    <source>
        <dbReference type="HAMAP-Rule" id="MF_01366"/>
    </source>
</evidence>
<evidence type="ECO:0000305" key="2"/>
<accession>Q82DL9</accession>
<sequence length="147" mass="16321">MRTYSPKPGDITRQWYVIDAQDVVLGRLATTAANILRGKHKPIYAPHVDAGDFVIIINADKVHLSGNKKTQKLAYRHSGYPGGLRSVRYDELLAKNPEKAVEKAIKGMIPKNTLGRQVLSKLKVYSGDQHPHAAQQPVPFEITQVAQ</sequence>
<reference key="1">
    <citation type="journal article" date="2001" name="Proc. Natl. Acad. Sci. U.S.A.">
        <title>Genome sequence of an industrial microorganism Streptomyces avermitilis: deducing the ability of producing secondary metabolites.</title>
        <authorList>
            <person name="Omura S."/>
            <person name="Ikeda H."/>
            <person name="Ishikawa J."/>
            <person name="Hanamoto A."/>
            <person name="Takahashi C."/>
            <person name="Shinose M."/>
            <person name="Takahashi Y."/>
            <person name="Horikawa H."/>
            <person name="Nakazawa H."/>
            <person name="Osonoe T."/>
            <person name="Kikuchi H."/>
            <person name="Shiba T."/>
            <person name="Sakaki Y."/>
            <person name="Hattori M."/>
        </authorList>
    </citation>
    <scope>NUCLEOTIDE SEQUENCE [LARGE SCALE GENOMIC DNA]</scope>
    <source>
        <strain>ATCC 31267 / DSM 46492 / JCM 5070 / NBRC 14893 / NCIMB 12804 / NRRL 8165 / MA-4680</strain>
    </source>
</reference>
<reference key="2">
    <citation type="journal article" date="2003" name="Nat. Biotechnol.">
        <title>Complete genome sequence and comparative analysis of the industrial microorganism Streptomyces avermitilis.</title>
        <authorList>
            <person name="Ikeda H."/>
            <person name="Ishikawa J."/>
            <person name="Hanamoto A."/>
            <person name="Shinose M."/>
            <person name="Kikuchi H."/>
            <person name="Shiba T."/>
            <person name="Sakaki Y."/>
            <person name="Hattori M."/>
            <person name="Omura S."/>
        </authorList>
    </citation>
    <scope>NUCLEOTIDE SEQUENCE [LARGE SCALE GENOMIC DNA]</scope>
    <source>
        <strain>ATCC 31267 / DSM 46492 / JCM 5070 / NBRC 14893 / NCIMB 12804 / NRRL 8165 / MA-4680</strain>
    </source>
</reference>
<protein>
    <recommendedName>
        <fullName evidence="1">Large ribosomal subunit protein uL13</fullName>
    </recommendedName>
    <alternativeName>
        <fullName evidence="2">50S ribosomal protein L13</fullName>
    </alternativeName>
</protein>
<gene>
    <name evidence="1" type="primary">rplM</name>
    <name type="ordered locus">SAV_4957</name>
</gene>
<keyword id="KW-1185">Reference proteome</keyword>
<keyword id="KW-0687">Ribonucleoprotein</keyword>
<keyword id="KW-0689">Ribosomal protein</keyword>
<organism>
    <name type="scientific">Streptomyces avermitilis (strain ATCC 31267 / DSM 46492 / JCM 5070 / NBRC 14893 / NCIMB 12804 / NRRL 8165 / MA-4680)</name>
    <dbReference type="NCBI Taxonomy" id="227882"/>
    <lineage>
        <taxon>Bacteria</taxon>
        <taxon>Bacillati</taxon>
        <taxon>Actinomycetota</taxon>
        <taxon>Actinomycetes</taxon>
        <taxon>Kitasatosporales</taxon>
        <taxon>Streptomycetaceae</taxon>
        <taxon>Streptomyces</taxon>
    </lineage>
</organism>
<proteinExistence type="inferred from homology"/>
<name>RL13_STRAW</name>
<comment type="function">
    <text evidence="1">This protein is one of the early assembly proteins of the 50S ribosomal subunit, although it is not seen to bind rRNA by itself. It is important during the early stages of 50S assembly.</text>
</comment>
<comment type="subunit">
    <text evidence="1">Part of the 50S ribosomal subunit.</text>
</comment>
<comment type="similarity">
    <text evidence="1">Belongs to the universal ribosomal protein uL13 family.</text>
</comment>
<dbReference type="EMBL" id="BA000030">
    <property type="protein sequence ID" value="BAC72669.1"/>
    <property type="molecule type" value="Genomic_DNA"/>
</dbReference>
<dbReference type="RefSeq" id="WP_010986363.1">
    <property type="nucleotide sequence ID" value="NZ_JZJK01000077.1"/>
</dbReference>
<dbReference type="SMR" id="Q82DL9"/>
<dbReference type="GeneID" id="41542040"/>
<dbReference type="KEGG" id="sma:SAVERM_4957"/>
<dbReference type="eggNOG" id="COG0102">
    <property type="taxonomic scope" value="Bacteria"/>
</dbReference>
<dbReference type="HOGENOM" id="CLU_082184_2_2_11"/>
<dbReference type="OrthoDB" id="9801330at2"/>
<dbReference type="Proteomes" id="UP000000428">
    <property type="component" value="Chromosome"/>
</dbReference>
<dbReference type="GO" id="GO:0022625">
    <property type="term" value="C:cytosolic large ribosomal subunit"/>
    <property type="evidence" value="ECO:0007669"/>
    <property type="project" value="TreeGrafter"/>
</dbReference>
<dbReference type="GO" id="GO:0003729">
    <property type="term" value="F:mRNA binding"/>
    <property type="evidence" value="ECO:0007669"/>
    <property type="project" value="TreeGrafter"/>
</dbReference>
<dbReference type="GO" id="GO:0003735">
    <property type="term" value="F:structural constituent of ribosome"/>
    <property type="evidence" value="ECO:0007669"/>
    <property type="project" value="InterPro"/>
</dbReference>
<dbReference type="GO" id="GO:0017148">
    <property type="term" value="P:negative regulation of translation"/>
    <property type="evidence" value="ECO:0007669"/>
    <property type="project" value="TreeGrafter"/>
</dbReference>
<dbReference type="GO" id="GO:0006412">
    <property type="term" value="P:translation"/>
    <property type="evidence" value="ECO:0007669"/>
    <property type="project" value="UniProtKB-UniRule"/>
</dbReference>
<dbReference type="CDD" id="cd00392">
    <property type="entry name" value="Ribosomal_L13"/>
    <property type="match status" value="1"/>
</dbReference>
<dbReference type="FunFam" id="3.90.1180.10:FF:000001">
    <property type="entry name" value="50S ribosomal protein L13"/>
    <property type="match status" value="1"/>
</dbReference>
<dbReference type="Gene3D" id="3.90.1180.10">
    <property type="entry name" value="Ribosomal protein L13"/>
    <property type="match status" value="1"/>
</dbReference>
<dbReference type="HAMAP" id="MF_01366">
    <property type="entry name" value="Ribosomal_uL13"/>
    <property type="match status" value="1"/>
</dbReference>
<dbReference type="InterPro" id="IPR005822">
    <property type="entry name" value="Ribosomal_uL13"/>
</dbReference>
<dbReference type="InterPro" id="IPR005823">
    <property type="entry name" value="Ribosomal_uL13_bac-type"/>
</dbReference>
<dbReference type="InterPro" id="IPR023563">
    <property type="entry name" value="Ribosomal_uL13_CS"/>
</dbReference>
<dbReference type="InterPro" id="IPR036899">
    <property type="entry name" value="Ribosomal_uL13_sf"/>
</dbReference>
<dbReference type="NCBIfam" id="TIGR01066">
    <property type="entry name" value="rplM_bact"/>
    <property type="match status" value="1"/>
</dbReference>
<dbReference type="PANTHER" id="PTHR11545:SF2">
    <property type="entry name" value="LARGE RIBOSOMAL SUBUNIT PROTEIN UL13M"/>
    <property type="match status" value="1"/>
</dbReference>
<dbReference type="PANTHER" id="PTHR11545">
    <property type="entry name" value="RIBOSOMAL PROTEIN L13"/>
    <property type="match status" value="1"/>
</dbReference>
<dbReference type="Pfam" id="PF00572">
    <property type="entry name" value="Ribosomal_L13"/>
    <property type="match status" value="1"/>
</dbReference>
<dbReference type="PIRSF" id="PIRSF002181">
    <property type="entry name" value="Ribosomal_L13"/>
    <property type="match status" value="1"/>
</dbReference>
<dbReference type="SUPFAM" id="SSF52161">
    <property type="entry name" value="Ribosomal protein L13"/>
    <property type="match status" value="1"/>
</dbReference>
<dbReference type="PROSITE" id="PS00783">
    <property type="entry name" value="RIBOSOMAL_L13"/>
    <property type="match status" value="1"/>
</dbReference>
<feature type="chain" id="PRO_0000261804" description="Large ribosomal subunit protein uL13">
    <location>
        <begin position="1"/>
        <end position="147"/>
    </location>
</feature>